<feature type="chain" id="PRO_1000205182" description="Chaperone protein DnaK">
    <location>
        <begin position="1"/>
        <end position="628"/>
    </location>
</feature>
<feature type="region of interest" description="Disordered" evidence="2">
    <location>
        <begin position="545"/>
        <end position="628"/>
    </location>
</feature>
<feature type="compositionally biased region" description="Basic and acidic residues" evidence="2">
    <location>
        <begin position="555"/>
        <end position="591"/>
    </location>
</feature>
<feature type="compositionally biased region" description="Low complexity" evidence="2">
    <location>
        <begin position="596"/>
        <end position="612"/>
    </location>
</feature>
<feature type="compositionally biased region" description="Basic and acidic residues" evidence="2">
    <location>
        <begin position="614"/>
        <end position="628"/>
    </location>
</feature>
<feature type="modified residue" description="Phosphothreonine; by autocatalysis" evidence="1">
    <location>
        <position position="195"/>
    </location>
</feature>
<name>DNAK_DEIDV</name>
<accession>C1CZH9</accession>
<organism>
    <name type="scientific">Deinococcus deserti (strain DSM 17065 / CIP 109153 / LMG 22923 / VCD115)</name>
    <dbReference type="NCBI Taxonomy" id="546414"/>
    <lineage>
        <taxon>Bacteria</taxon>
        <taxon>Thermotogati</taxon>
        <taxon>Deinococcota</taxon>
        <taxon>Deinococci</taxon>
        <taxon>Deinococcales</taxon>
        <taxon>Deinococcaceae</taxon>
        <taxon>Deinococcus</taxon>
    </lineage>
</organism>
<keyword id="KW-0067">ATP-binding</keyword>
<keyword id="KW-0143">Chaperone</keyword>
<keyword id="KW-0547">Nucleotide-binding</keyword>
<keyword id="KW-0597">Phosphoprotein</keyword>
<keyword id="KW-1185">Reference proteome</keyword>
<keyword id="KW-0346">Stress response</keyword>
<dbReference type="EMBL" id="CP001114">
    <property type="protein sequence ID" value="ACO47227.1"/>
    <property type="molecule type" value="Genomic_DNA"/>
</dbReference>
<dbReference type="RefSeq" id="WP_012694348.1">
    <property type="nucleotide sequence ID" value="NC_012526.1"/>
</dbReference>
<dbReference type="SMR" id="C1CZH9"/>
<dbReference type="STRING" id="546414.Deide_21970"/>
<dbReference type="PaxDb" id="546414-Deide_21970"/>
<dbReference type="KEGG" id="ddr:Deide_21970"/>
<dbReference type="eggNOG" id="COG0443">
    <property type="taxonomic scope" value="Bacteria"/>
</dbReference>
<dbReference type="HOGENOM" id="CLU_005965_2_1_0"/>
<dbReference type="OrthoDB" id="9766019at2"/>
<dbReference type="Proteomes" id="UP000002208">
    <property type="component" value="Chromosome"/>
</dbReference>
<dbReference type="GO" id="GO:0005524">
    <property type="term" value="F:ATP binding"/>
    <property type="evidence" value="ECO:0007669"/>
    <property type="project" value="UniProtKB-UniRule"/>
</dbReference>
<dbReference type="GO" id="GO:0140662">
    <property type="term" value="F:ATP-dependent protein folding chaperone"/>
    <property type="evidence" value="ECO:0007669"/>
    <property type="project" value="InterPro"/>
</dbReference>
<dbReference type="GO" id="GO:0051082">
    <property type="term" value="F:unfolded protein binding"/>
    <property type="evidence" value="ECO:0007669"/>
    <property type="project" value="InterPro"/>
</dbReference>
<dbReference type="CDD" id="cd10234">
    <property type="entry name" value="ASKHA_NBD_HSP70_DnaK-like"/>
    <property type="match status" value="1"/>
</dbReference>
<dbReference type="FunFam" id="2.60.34.10:FF:000014">
    <property type="entry name" value="Chaperone protein DnaK HSP70"/>
    <property type="match status" value="1"/>
</dbReference>
<dbReference type="FunFam" id="3.30.420.40:FF:000004">
    <property type="entry name" value="Molecular chaperone DnaK"/>
    <property type="match status" value="1"/>
</dbReference>
<dbReference type="FunFam" id="3.90.640.10:FF:000003">
    <property type="entry name" value="Molecular chaperone DnaK"/>
    <property type="match status" value="1"/>
</dbReference>
<dbReference type="Gene3D" id="3.30.420.40">
    <property type="match status" value="2"/>
</dbReference>
<dbReference type="Gene3D" id="3.90.640.10">
    <property type="entry name" value="Actin, Chain A, domain 4"/>
    <property type="match status" value="1"/>
</dbReference>
<dbReference type="Gene3D" id="2.60.34.10">
    <property type="entry name" value="Substrate Binding Domain Of DNAk, Chain A, domain 1"/>
    <property type="match status" value="1"/>
</dbReference>
<dbReference type="HAMAP" id="MF_00332">
    <property type="entry name" value="DnaK"/>
    <property type="match status" value="1"/>
</dbReference>
<dbReference type="InterPro" id="IPR043129">
    <property type="entry name" value="ATPase_NBD"/>
</dbReference>
<dbReference type="InterPro" id="IPR012725">
    <property type="entry name" value="Chaperone_DnaK"/>
</dbReference>
<dbReference type="InterPro" id="IPR018181">
    <property type="entry name" value="Heat_shock_70_CS"/>
</dbReference>
<dbReference type="InterPro" id="IPR029047">
    <property type="entry name" value="HSP70_peptide-bd_sf"/>
</dbReference>
<dbReference type="InterPro" id="IPR013126">
    <property type="entry name" value="Hsp_70_fam"/>
</dbReference>
<dbReference type="NCBIfam" id="NF001413">
    <property type="entry name" value="PRK00290.1"/>
    <property type="match status" value="1"/>
</dbReference>
<dbReference type="NCBIfam" id="TIGR02350">
    <property type="entry name" value="prok_dnaK"/>
    <property type="match status" value="1"/>
</dbReference>
<dbReference type="PANTHER" id="PTHR19375">
    <property type="entry name" value="HEAT SHOCK PROTEIN 70KDA"/>
    <property type="match status" value="1"/>
</dbReference>
<dbReference type="Pfam" id="PF00012">
    <property type="entry name" value="HSP70"/>
    <property type="match status" value="1"/>
</dbReference>
<dbReference type="PRINTS" id="PR00301">
    <property type="entry name" value="HEATSHOCK70"/>
</dbReference>
<dbReference type="SUPFAM" id="SSF53067">
    <property type="entry name" value="Actin-like ATPase domain"/>
    <property type="match status" value="2"/>
</dbReference>
<dbReference type="SUPFAM" id="SSF100920">
    <property type="entry name" value="Heat shock protein 70kD (HSP70), peptide-binding domain"/>
    <property type="match status" value="1"/>
</dbReference>
<dbReference type="PROSITE" id="PS00297">
    <property type="entry name" value="HSP70_1"/>
    <property type="match status" value="1"/>
</dbReference>
<dbReference type="PROSITE" id="PS00329">
    <property type="entry name" value="HSP70_2"/>
    <property type="match status" value="1"/>
</dbReference>
<dbReference type="PROSITE" id="PS01036">
    <property type="entry name" value="HSP70_3"/>
    <property type="match status" value="1"/>
</dbReference>
<proteinExistence type="inferred from homology"/>
<comment type="function">
    <text evidence="1">Acts as a chaperone.</text>
</comment>
<comment type="induction">
    <text evidence="1">By stress conditions e.g. heat shock.</text>
</comment>
<comment type="similarity">
    <text evidence="1">Belongs to the heat shock protein 70 family.</text>
</comment>
<gene>
    <name evidence="1" type="primary">dnaK</name>
    <name type="ordered locus">Deide_21970</name>
</gene>
<evidence type="ECO:0000255" key="1">
    <source>
        <dbReference type="HAMAP-Rule" id="MF_00332"/>
    </source>
</evidence>
<evidence type="ECO:0000256" key="2">
    <source>
        <dbReference type="SAM" id="MobiDB-lite"/>
    </source>
</evidence>
<protein>
    <recommendedName>
        <fullName evidence="1">Chaperone protein DnaK</fullName>
    </recommendedName>
    <alternativeName>
        <fullName evidence="1">HSP70</fullName>
    </alternativeName>
    <alternativeName>
        <fullName evidence="1">Heat shock 70 kDa protein</fullName>
    </alternativeName>
    <alternativeName>
        <fullName evidence="1">Heat shock protein 70</fullName>
    </alternativeName>
</protein>
<reference key="1">
    <citation type="journal article" date="2009" name="PLoS Genet.">
        <title>Alliance of proteomics and genomics to unravel the specificities of Sahara bacterium Deinococcus deserti.</title>
        <authorList>
            <person name="de Groot A."/>
            <person name="Dulermo R."/>
            <person name="Ortet P."/>
            <person name="Blanchard L."/>
            <person name="Guerin P."/>
            <person name="Fernandez B."/>
            <person name="Vacherie B."/>
            <person name="Dossat C."/>
            <person name="Jolivet E."/>
            <person name="Siguier P."/>
            <person name="Chandler M."/>
            <person name="Barakat M."/>
            <person name="Dedieu A."/>
            <person name="Barbe V."/>
            <person name="Heulin T."/>
            <person name="Sommer S."/>
            <person name="Achouak W."/>
            <person name="Armengaud J."/>
        </authorList>
    </citation>
    <scope>NUCLEOTIDE SEQUENCE [LARGE SCALE GENOMIC DNA]</scope>
    <source>
        <strain>DSM 17065 / CIP 109153 / LMG 22923 / VCD115</strain>
    </source>
</reference>
<sequence>MAKAVGIDLGTTNSVISVMEGGRPEVIVNAEGGRTTPSVVAYKGDERLVGQIARRQAALNPAATLFEVKRFIGRRWDEVKEEAARSPFKVKEGPGGSVRIEVNGQDLAPEQVSAEVLRKLVSDASAKLGQKITDAVITVPAYFDNSQREATKQAGEIAGLNVLRVINEPTAAALAYGLERKGNETVLVFDLGGGTFDVTILELGDGVFEVKSTAGDTHLGGADFDHRIVDWLAEEFNREHNFDLRKDKQALQRLIEAAEKAKIDLSNASESSISLPFITFDPETRTPMHLERTLSRAKFEELTADLLRRVRKPVEQALADAKLSASDIDEVILVGGSTRIPAVKRIVQDLVGKTPNESVNPDEAVALGAAVQAGIIQGDSALGDIVLVDVTPLTLGVEVKGGMIAPMITRNTTVPAKKTEIYTTAENNQPGVEINVLQGERPMASDNKSLGRFKLEGIPPMRAGQAQIEVTFDIDANGILHVTAKEKTSGKEASIRIENTTTLDKSDVERMVREAEENAAADKLRREKVEKRNNLDSLRVQATQQLEENEGAAQDAKDALKAAADEAEEAVRSEDDARIESAQKRLEEELRTFMTAQQAAGQGQPQGAQAQGTKADDDVIDADFKAAE</sequence>